<evidence type="ECO:0000255" key="1">
    <source>
        <dbReference type="HAMAP-Rule" id="MF_01232"/>
    </source>
</evidence>
<evidence type="ECO:0000256" key="2">
    <source>
        <dbReference type="SAM" id="MobiDB-lite"/>
    </source>
</evidence>
<keyword id="KW-1185">Reference proteome</keyword>
<dbReference type="EMBL" id="AE004091">
    <property type="protein sequence ID" value="AAG03976.1"/>
    <property type="molecule type" value="Genomic_DNA"/>
</dbReference>
<dbReference type="PIR" id="G83573">
    <property type="entry name" value="G83573"/>
</dbReference>
<dbReference type="RefSeq" id="NP_249278.1">
    <property type="nucleotide sequence ID" value="NC_002516.2"/>
</dbReference>
<dbReference type="RefSeq" id="WP_003099579.1">
    <property type="nucleotide sequence ID" value="NZ_QZGE01000010.1"/>
</dbReference>
<dbReference type="SMR" id="Q9I5V0"/>
<dbReference type="FunCoup" id="Q9I5V0">
    <property type="interactions" value="12"/>
</dbReference>
<dbReference type="STRING" id="208964.PA0587"/>
<dbReference type="PaxDb" id="208964-PA0587"/>
<dbReference type="GeneID" id="879664"/>
<dbReference type="KEGG" id="pae:PA0587"/>
<dbReference type="PATRIC" id="fig|208964.12.peg.622"/>
<dbReference type="PseudoCAP" id="PA0587"/>
<dbReference type="HOGENOM" id="CLU_049702_0_0_6"/>
<dbReference type="InParanoid" id="Q9I5V0"/>
<dbReference type="OrthoDB" id="9788289at2"/>
<dbReference type="PhylomeDB" id="Q9I5V0"/>
<dbReference type="BioCyc" id="PAER208964:G1FZ6-594-MONOMER"/>
<dbReference type="Proteomes" id="UP000002438">
    <property type="component" value="Chromosome"/>
</dbReference>
<dbReference type="HAMAP" id="MF_01232">
    <property type="entry name" value="UPF0229"/>
    <property type="match status" value="1"/>
</dbReference>
<dbReference type="InterPro" id="IPR006698">
    <property type="entry name" value="UPF0229"/>
</dbReference>
<dbReference type="NCBIfam" id="NF003707">
    <property type="entry name" value="PRK05325.1-2"/>
    <property type="match status" value="1"/>
</dbReference>
<dbReference type="NCBIfam" id="NF003708">
    <property type="entry name" value="PRK05325.1-3"/>
    <property type="match status" value="1"/>
</dbReference>
<dbReference type="PANTHER" id="PTHR30510">
    <property type="entry name" value="UPF0229 PROTEIN YEAH"/>
    <property type="match status" value="1"/>
</dbReference>
<dbReference type="PANTHER" id="PTHR30510:SF2">
    <property type="entry name" value="UPF0229 PROTEIN YEAH"/>
    <property type="match status" value="1"/>
</dbReference>
<dbReference type="Pfam" id="PF04285">
    <property type="entry name" value="DUF444"/>
    <property type="match status" value="1"/>
</dbReference>
<gene>
    <name type="ordered locus">PA0587</name>
</gene>
<accession>Q9I5V0</accession>
<name>Y587_PSEAE</name>
<sequence length="423" mass="48742">MSYVIDRRLNGKNKSTVNRQRFLRRYREHIKKAVEEAVSRRSITDMEHGEQISIPGRDIDEPVLHHGRGGRQTVVHPGNKEFTAGEHIARPSGGGGGRGGGKASNSGEGMDDFVFQITQEEFLDFMFEDLELPNLVKRHITGTDTFKTVRAGISNDGNPSRINIVRTLRSAHARRIALSGGSRAKLRAALKELERIKREEPDNLGDIQELELEIAKLRARIDRVPFLDTFDLKYNLLVKQPNPTSKAVMFCLMDVSGSMTQATKDIAKRFFILLYLFLKRNYEKIEVVFIRHHTSAREVDEEEFFYSRETGGTIVSSALKMMQEIMAERYPTHEWNIYAAQASDGDNWNDDSPVCRDILLKQIMPFVQYYTYVEITPREHQALWFEYERVREAFEDSFAQQQIVSASDIYPVFRELFQRRLVA</sequence>
<protein>
    <recommendedName>
        <fullName evidence="1">UPF0229 protein PA0587</fullName>
    </recommendedName>
</protein>
<comment type="similarity">
    <text evidence="1">Belongs to the UPF0229 family.</text>
</comment>
<organism>
    <name type="scientific">Pseudomonas aeruginosa (strain ATCC 15692 / DSM 22644 / CIP 104116 / JCM 14847 / LMG 12228 / 1C / PRS 101 / PAO1)</name>
    <dbReference type="NCBI Taxonomy" id="208964"/>
    <lineage>
        <taxon>Bacteria</taxon>
        <taxon>Pseudomonadati</taxon>
        <taxon>Pseudomonadota</taxon>
        <taxon>Gammaproteobacteria</taxon>
        <taxon>Pseudomonadales</taxon>
        <taxon>Pseudomonadaceae</taxon>
        <taxon>Pseudomonas</taxon>
    </lineage>
</organism>
<reference key="1">
    <citation type="journal article" date="2000" name="Nature">
        <title>Complete genome sequence of Pseudomonas aeruginosa PAO1, an opportunistic pathogen.</title>
        <authorList>
            <person name="Stover C.K."/>
            <person name="Pham X.-Q.T."/>
            <person name="Erwin A.L."/>
            <person name="Mizoguchi S.D."/>
            <person name="Warrener P."/>
            <person name="Hickey M.J."/>
            <person name="Brinkman F.S.L."/>
            <person name="Hufnagle W.O."/>
            <person name="Kowalik D.J."/>
            <person name="Lagrou M."/>
            <person name="Garber R.L."/>
            <person name="Goltry L."/>
            <person name="Tolentino E."/>
            <person name="Westbrock-Wadman S."/>
            <person name="Yuan Y."/>
            <person name="Brody L.L."/>
            <person name="Coulter S.N."/>
            <person name="Folger K.R."/>
            <person name="Kas A."/>
            <person name="Larbig K."/>
            <person name="Lim R.M."/>
            <person name="Smith K.A."/>
            <person name="Spencer D.H."/>
            <person name="Wong G.K.-S."/>
            <person name="Wu Z."/>
            <person name="Paulsen I.T."/>
            <person name="Reizer J."/>
            <person name="Saier M.H. Jr."/>
            <person name="Hancock R.E.W."/>
            <person name="Lory S."/>
            <person name="Olson M.V."/>
        </authorList>
    </citation>
    <scope>NUCLEOTIDE SEQUENCE [LARGE SCALE GENOMIC DNA]</scope>
    <source>
        <strain>ATCC 15692 / DSM 22644 / CIP 104116 / JCM 14847 / LMG 12228 / 1C / PRS 101 / PAO1</strain>
    </source>
</reference>
<feature type="chain" id="PRO_0000068199" description="UPF0229 protein PA0587">
    <location>
        <begin position="1"/>
        <end position="423"/>
    </location>
</feature>
<feature type="region of interest" description="Disordered" evidence="2">
    <location>
        <begin position="84"/>
        <end position="107"/>
    </location>
</feature>
<feature type="compositionally biased region" description="Gly residues" evidence="2">
    <location>
        <begin position="92"/>
        <end position="102"/>
    </location>
</feature>
<proteinExistence type="inferred from homology"/>